<keyword id="KW-0997">Cell inner membrane</keyword>
<keyword id="KW-1003">Cell membrane</keyword>
<keyword id="KW-0472">Membrane</keyword>
<keyword id="KW-0812">Transmembrane</keyword>
<keyword id="KW-1133">Transmembrane helix</keyword>
<sequence>MKLLNILNYKALGLSLLYLALILVTFQISMGSYGEDEPQAGSILMVAGLIFSIIGVFLLMKFKPTYILWEKLKR</sequence>
<comment type="function">
    <text evidence="4">May act as a membrane anchor for the tetrachloroethene reductive dehalogenase PceA.</text>
</comment>
<comment type="subcellular location">
    <subcellularLocation>
        <location evidence="3">Cell inner membrane</location>
        <topology evidence="1">Multi-pass membrane protein</topology>
    </subcellularLocation>
</comment>
<comment type="similarity">
    <text evidence="3">Belongs to the PceB family.</text>
</comment>
<dbReference type="EMBL" id="AF022812">
    <property type="protein sequence ID" value="AAC60789.1"/>
    <property type="molecule type" value="Genomic_DNA"/>
</dbReference>
<dbReference type="EMBL" id="CP042966">
    <property type="protein sequence ID" value="QEH06287.1"/>
    <property type="molecule type" value="Genomic_DNA"/>
</dbReference>
<dbReference type="RefSeq" id="WP_025344666.1">
    <property type="nucleotide sequence ID" value="NZ_CP042966.1"/>
</dbReference>
<dbReference type="STRING" id="1150621.SMUL_1532"/>
<dbReference type="OrthoDB" id="5340731at2"/>
<dbReference type="GO" id="GO:0005886">
    <property type="term" value="C:plasma membrane"/>
    <property type="evidence" value="ECO:0007669"/>
    <property type="project" value="UniProtKB-SubCell"/>
</dbReference>
<gene>
    <name evidence="2" type="primary">pceB</name>
    <name evidence="5" type="ORF">SMN_1517</name>
</gene>
<name>PCEB_SULMU</name>
<protein>
    <recommendedName>
        <fullName evidence="3">Probable tetrachloroethene reductive dehalogenase membrane anchor protein</fullName>
    </recommendedName>
</protein>
<proteinExistence type="inferred from homology"/>
<evidence type="ECO:0000255" key="1"/>
<evidence type="ECO:0000303" key="2">
    <source>
    </source>
</evidence>
<evidence type="ECO:0000305" key="3"/>
<evidence type="ECO:0000305" key="4">
    <source>
    </source>
</evidence>
<evidence type="ECO:0000312" key="5">
    <source>
        <dbReference type="EMBL" id="QEH06287.1"/>
    </source>
</evidence>
<accession>O68253</accession>
<feature type="chain" id="PRO_0000453979" description="Probable tetrachloroethene reductive dehalogenase membrane anchor protein">
    <location>
        <begin position="1"/>
        <end position="74"/>
    </location>
</feature>
<feature type="transmembrane region" description="Helical" evidence="1">
    <location>
        <begin position="11"/>
        <end position="31"/>
    </location>
</feature>
<feature type="transmembrane region" description="Helical" evidence="1">
    <location>
        <begin position="40"/>
        <end position="60"/>
    </location>
</feature>
<organism>
    <name type="scientific">Sulfurospirillum multivorans</name>
    <name type="common">Dehalospirillum multivorans</name>
    <dbReference type="NCBI Taxonomy" id="66821"/>
    <lineage>
        <taxon>Bacteria</taxon>
        <taxon>Pseudomonadati</taxon>
        <taxon>Campylobacterota</taxon>
        <taxon>Epsilonproteobacteria</taxon>
        <taxon>Campylobacterales</taxon>
        <taxon>Sulfurospirillaceae</taxon>
        <taxon>Sulfurospirillum</taxon>
    </lineage>
</organism>
<reference key="1">
    <citation type="journal article" date="1998" name="J. Bacteriol.">
        <title>Tetrachloroethene dehalogenase from Dehalospirillum multivorans: cloning, sequencing of the encoding genes, and expression of the pceA gene in Escherichia coli.</title>
        <authorList>
            <person name="Neumann A."/>
            <person name="Wohlfarth G."/>
            <person name="Diekert G."/>
        </authorList>
    </citation>
    <scope>NUCLEOTIDE SEQUENCE [GENOMIC DNA]</scope>
    <scope>FUNCTION</scope>
</reference>
<reference key="2">
    <citation type="submission" date="2019-08" db="EMBL/GenBank/DDBJ databases">
        <title>Organohalide respiration in Sulfurospirillum species is regulated by a two-component system as unraveled by comparative genomics, and transcriptomics, and regulator binding studies.</title>
        <authorList>
            <person name="Goris T."/>
            <person name="Esken J."/>
            <person name="Gadkari J."/>
            <person name="Bischler T."/>
            <person name="Foerstner K."/>
            <person name="Sharma C.M."/>
            <person name="Diekert G."/>
            <person name="Schubert T."/>
        </authorList>
    </citation>
    <scope>NUCLEOTIDE SEQUENCE [LARGE SCALE GENOMIC DNA]</scope>
    <source>
        <strain>DSM 15119 / N</strain>
    </source>
</reference>